<evidence type="ECO:0000255" key="1">
    <source>
        <dbReference type="HAMAP-Rule" id="MF_00454"/>
    </source>
</evidence>
<accession>A4Y6Z6</accession>
<comment type="function">
    <text evidence="1">Fluoride-specific ion channel. Important for reducing fluoride concentration in the cell, thus reducing its toxicity.</text>
</comment>
<comment type="catalytic activity">
    <reaction evidence="1">
        <text>fluoride(in) = fluoride(out)</text>
        <dbReference type="Rhea" id="RHEA:76159"/>
        <dbReference type="ChEBI" id="CHEBI:17051"/>
    </reaction>
    <physiologicalReaction direction="left-to-right" evidence="1">
        <dbReference type="Rhea" id="RHEA:76160"/>
    </physiologicalReaction>
</comment>
<comment type="activity regulation">
    <text evidence="1">Na(+) is not transported, but it plays an essential structural role and its presence is essential for fluoride channel function.</text>
</comment>
<comment type="subcellular location">
    <subcellularLocation>
        <location evidence="1">Cell inner membrane</location>
        <topology evidence="1">Multi-pass membrane protein</topology>
    </subcellularLocation>
</comment>
<comment type="similarity">
    <text evidence="1">Belongs to the fluoride channel Fluc/FEX (TC 1.A.43) family.</text>
</comment>
<name>FLUC_SHEPC</name>
<feature type="chain" id="PRO_1000026418" description="Fluoride-specific ion channel FluC">
    <location>
        <begin position="1"/>
        <end position="124"/>
    </location>
</feature>
<feature type="transmembrane region" description="Helical" evidence="1">
    <location>
        <begin position="4"/>
        <end position="24"/>
    </location>
</feature>
<feature type="transmembrane region" description="Helical" evidence="1">
    <location>
        <begin position="35"/>
        <end position="55"/>
    </location>
</feature>
<feature type="transmembrane region" description="Helical" evidence="1">
    <location>
        <begin position="60"/>
        <end position="80"/>
    </location>
</feature>
<feature type="transmembrane region" description="Helical" evidence="1">
    <location>
        <begin position="95"/>
        <end position="115"/>
    </location>
</feature>
<feature type="binding site" evidence="1">
    <location>
        <position position="74"/>
    </location>
    <ligand>
        <name>Na(+)</name>
        <dbReference type="ChEBI" id="CHEBI:29101"/>
        <note>structural</note>
    </ligand>
</feature>
<feature type="binding site" evidence="1">
    <location>
        <position position="77"/>
    </location>
    <ligand>
        <name>Na(+)</name>
        <dbReference type="ChEBI" id="CHEBI:29101"/>
        <note>structural</note>
    </ligand>
</feature>
<keyword id="KW-0997">Cell inner membrane</keyword>
<keyword id="KW-1003">Cell membrane</keyword>
<keyword id="KW-0407">Ion channel</keyword>
<keyword id="KW-0406">Ion transport</keyword>
<keyword id="KW-0472">Membrane</keyword>
<keyword id="KW-0479">Metal-binding</keyword>
<keyword id="KW-0915">Sodium</keyword>
<keyword id="KW-0812">Transmembrane</keyword>
<keyword id="KW-1133">Transmembrane helix</keyword>
<keyword id="KW-0813">Transport</keyword>
<protein>
    <recommendedName>
        <fullName evidence="1">Fluoride-specific ion channel FluC</fullName>
    </recommendedName>
</protein>
<proteinExistence type="inferred from homology"/>
<dbReference type="EMBL" id="CP000681">
    <property type="protein sequence ID" value="ABP75729.1"/>
    <property type="molecule type" value="Genomic_DNA"/>
</dbReference>
<dbReference type="SMR" id="A4Y6Z6"/>
<dbReference type="STRING" id="319224.Sputcn32_2008"/>
<dbReference type="KEGG" id="spc:Sputcn32_2008"/>
<dbReference type="eggNOG" id="COG0239">
    <property type="taxonomic scope" value="Bacteria"/>
</dbReference>
<dbReference type="HOGENOM" id="CLU_114342_3_0_6"/>
<dbReference type="GO" id="GO:0005886">
    <property type="term" value="C:plasma membrane"/>
    <property type="evidence" value="ECO:0007669"/>
    <property type="project" value="UniProtKB-SubCell"/>
</dbReference>
<dbReference type="GO" id="GO:0062054">
    <property type="term" value="F:fluoride channel activity"/>
    <property type="evidence" value="ECO:0007669"/>
    <property type="project" value="UniProtKB-UniRule"/>
</dbReference>
<dbReference type="GO" id="GO:0046872">
    <property type="term" value="F:metal ion binding"/>
    <property type="evidence" value="ECO:0007669"/>
    <property type="project" value="UniProtKB-KW"/>
</dbReference>
<dbReference type="GO" id="GO:0140114">
    <property type="term" value="P:cellular detoxification of fluoride"/>
    <property type="evidence" value="ECO:0007669"/>
    <property type="project" value="UniProtKB-UniRule"/>
</dbReference>
<dbReference type="HAMAP" id="MF_00454">
    <property type="entry name" value="FluC"/>
    <property type="match status" value="1"/>
</dbReference>
<dbReference type="InterPro" id="IPR003691">
    <property type="entry name" value="FluC"/>
</dbReference>
<dbReference type="NCBIfam" id="TIGR00494">
    <property type="entry name" value="crcB"/>
    <property type="match status" value="1"/>
</dbReference>
<dbReference type="PANTHER" id="PTHR28259">
    <property type="entry name" value="FLUORIDE EXPORT PROTEIN 1-RELATED"/>
    <property type="match status" value="1"/>
</dbReference>
<dbReference type="PANTHER" id="PTHR28259:SF1">
    <property type="entry name" value="FLUORIDE EXPORT PROTEIN 1-RELATED"/>
    <property type="match status" value="1"/>
</dbReference>
<dbReference type="Pfam" id="PF02537">
    <property type="entry name" value="CRCB"/>
    <property type="match status" value="1"/>
</dbReference>
<sequence>MTNVLLVALGGSIGAVFRYLISIFMIQVFGSSFPFGTLVVNVIGSFFMGVIYALGQMSHISPELKALIGVGLLGALTTFSTFSNETLLLLQEGDWLKAILNVVLNLSLCLFMVYLGQQLVFSRI</sequence>
<reference key="1">
    <citation type="submission" date="2007-04" db="EMBL/GenBank/DDBJ databases">
        <title>Complete sequence of Shewanella putrefaciens CN-32.</title>
        <authorList>
            <consortium name="US DOE Joint Genome Institute"/>
            <person name="Copeland A."/>
            <person name="Lucas S."/>
            <person name="Lapidus A."/>
            <person name="Barry K."/>
            <person name="Detter J.C."/>
            <person name="Glavina del Rio T."/>
            <person name="Hammon N."/>
            <person name="Israni S."/>
            <person name="Dalin E."/>
            <person name="Tice H."/>
            <person name="Pitluck S."/>
            <person name="Chain P."/>
            <person name="Malfatti S."/>
            <person name="Shin M."/>
            <person name="Vergez L."/>
            <person name="Schmutz J."/>
            <person name="Larimer F."/>
            <person name="Land M."/>
            <person name="Hauser L."/>
            <person name="Kyrpides N."/>
            <person name="Mikhailova N."/>
            <person name="Romine M.F."/>
            <person name="Fredrickson J."/>
            <person name="Tiedje J."/>
            <person name="Richardson P."/>
        </authorList>
    </citation>
    <scope>NUCLEOTIDE SEQUENCE [LARGE SCALE GENOMIC DNA]</scope>
    <source>
        <strain>CN-32 / ATCC BAA-453</strain>
    </source>
</reference>
<organism>
    <name type="scientific">Shewanella putrefaciens (strain CN-32 / ATCC BAA-453)</name>
    <dbReference type="NCBI Taxonomy" id="319224"/>
    <lineage>
        <taxon>Bacteria</taxon>
        <taxon>Pseudomonadati</taxon>
        <taxon>Pseudomonadota</taxon>
        <taxon>Gammaproteobacteria</taxon>
        <taxon>Alteromonadales</taxon>
        <taxon>Shewanellaceae</taxon>
        <taxon>Shewanella</taxon>
    </lineage>
</organism>
<gene>
    <name evidence="1" type="primary">fluC</name>
    <name evidence="1" type="synonym">crcB</name>
    <name type="ordered locus">Sputcn32_2008</name>
</gene>